<feature type="chain" id="PRO_1000130781" description="RNase adapter protein RapZ">
    <location>
        <begin position="1"/>
        <end position="284"/>
    </location>
</feature>
<feature type="region of interest" description="RNA-binding" evidence="1">
    <location>
        <begin position="266"/>
        <end position="284"/>
    </location>
</feature>
<feature type="binding site" evidence="1">
    <location>
        <begin position="8"/>
        <end position="15"/>
    </location>
    <ligand>
        <name>ATP</name>
        <dbReference type="ChEBI" id="CHEBI:30616"/>
    </ligand>
</feature>
<feature type="binding site" evidence="1">
    <location>
        <begin position="56"/>
        <end position="59"/>
    </location>
    <ligand>
        <name>GTP</name>
        <dbReference type="ChEBI" id="CHEBI:37565"/>
    </ligand>
</feature>
<accession>B5BGM9</accession>
<name>RAPZ_SALPK</name>
<dbReference type="EMBL" id="FM200053">
    <property type="protein sequence ID" value="CAR61227.1"/>
    <property type="molecule type" value="Genomic_DNA"/>
</dbReference>
<dbReference type="RefSeq" id="WP_000243749.1">
    <property type="nucleotide sequence ID" value="NC_011147.1"/>
</dbReference>
<dbReference type="SMR" id="B5BGM9"/>
<dbReference type="KEGG" id="sek:SSPA2978"/>
<dbReference type="HOGENOM" id="CLU_059558_1_1_6"/>
<dbReference type="Proteomes" id="UP000001869">
    <property type="component" value="Chromosome"/>
</dbReference>
<dbReference type="GO" id="GO:0005524">
    <property type="term" value="F:ATP binding"/>
    <property type="evidence" value="ECO:0007669"/>
    <property type="project" value="UniProtKB-UniRule"/>
</dbReference>
<dbReference type="GO" id="GO:0005525">
    <property type="term" value="F:GTP binding"/>
    <property type="evidence" value="ECO:0007669"/>
    <property type="project" value="UniProtKB-UniRule"/>
</dbReference>
<dbReference type="GO" id="GO:0003723">
    <property type="term" value="F:RNA binding"/>
    <property type="evidence" value="ECO:0007669"/>
    <property type="project" value="UniProtKB-KW"/>
</dbReference>
<dbReference type="Gene3D" id="3.40.50.300">
    <property type="entry name" value="P-loop containing nucleotide triphosphate hydrolases"/>
    <property type="match status" value="1"/>
</dbReference>
<dbReference type="HAMAP" id="MF_00636">
    <property type="entry name" value="RapZ_like"/>
    <property type="match status" value="1"/>
</dbReference>
<dbReference type="InterPro" id="IPR027417">
    <property type="entry name" value="P-loop_NTPase"/>
</dbReference>
<dbReference type="InterPro" id="IPR005337">
    <property type="entry name" value="RapZ-like"/>
</dbReference>
<dbReference type="InterPro" id="IPR053930">
    <property type="entry name" value="RapZ-like_N"/>
</dbReference>
<dbReference type="InterPro" id="IPR053931">
    <property type="entry name" value="RapZ_C"/>
</dbReference>
<dbReference type="NCBIfam" id="NF003828">
    <property type="entry name" value="PRK05416.1"/>
    <property type="match status" value="1"/>
</dbReference>
<dbReference type="PANTHER" id="PTHR30448">
    <property type="entry name" value="RNASE ADAPTER PROTEIN RAPZ"/>
    <property type="match status" value="1"/>
</dbReference>
<dbReference type="PANTHER" id="PTHR30448:SF0">
    <property type="entry name" value="RNASE ADAPTER PROTEIN RAPZ"/>
    <property type="match status" value="1"/>
</dbReference>
<dbReference type="Pfam" id="PF22740">
    <property type="entry name" value="PapZ_C"/>
    <property type="match status" value="1"/>
</dbReference>
<dbReference type="Pfam" id="PF03668">
    <property type="entry name" value="RapZ-like_N"/>
    <property type="match status" value="1"/>
</dbReference>
<dbReference type="PIRSF" id="PIRSF005052">
    <property type="entry name" value="P-loopkin"/>
    <property type="match status" value="1"/>
</dbReference>
<dbReference type="SUPFAM" id="SSF52540">
    <property type="entry name" value="P-loop containing nucleoside triphosphate hydrolases"/>
    <property type="match status" value="1"/>
</dbReference>
<evidence type="ECO:0000255" key="1">
    <source>
        <dbReference type="HAMAP-Rule" id="MF_00636"/>
    </source>
</evidence>
<gene>
    <name evidence="1" type="primary">rapZ</name>
    <name type="ordered locus">SSPA2978</name>
</gene>
<comment type="function">
    <text evidence="1">Modulates the synthesis of GlmS, by affecting the processing and stability of the regulatory small RNA GlmZ. When glucosamine-6-phosphate (GlcN6P) concentrations are high in the cell, RapZ binds GlmZ and targets it to cleavage by RNase E. Consequently, GlmZ is inactivated and unable to activate GlmS synthesis. Under low GlcN6P concentrations, RapZ is sequestered and inactivated by an other regulatory small RNA, GlmY, preventing GlmZ degradation and leading to synthesis of GlmS.</text>
</comment>
<comment type="subunit">
    <text evidence="1">Homotrimer.</text>
</comment>
<comment type="similarity">
    <text evidence="1">Belongs to the RapZ-like family. RapZ subfamily.</text>
</comment>
<protein>
    <recommendedName>
        <fullName evidence="1">RNase adapter protein RapZ</fullName>
    </recommendedName>
</protein>
<sequence length="284" mass="32464">MVLMIVSGRSGSGKSVALRALEDMGFYCVDNLPVVLLPDLARTLADRQISAAVSIDVRNMPESPEIFEQAMNNLPGAFSPQLLFLDADRNTLIRRYSDTRRLHPLSSKNLSLESAIDKESDLLEPLRSRADLIVDTSEMSVHELAEMLRTRLLGKRERELTMVFESFGFKHGIPIDADYVFDVRFLPNPHWDPKLRPMTGLDKPVAAFLDRHTEVHNFIYQTRSYLELWLPMLETNNRSYLTVAIGCTGGKHRSVYIAEQLADYFRSRGKNVQSRHRTLEKRKT</sequence>
<reference key="1">
    <citation type="journal article" date="2009" name="BMC Genomics">
        <title>Pseudogene accumulation in the evolutionary histories of Salmonella enterica serovars Paratyphi A and Typhi.</title>
        <authorList>
            <person name="Holt K.E."/>
            <person name="Thomson N.R."/>
            <person name="Wain J."/>
            <person name="Langridge G.C."/>
            <person name="Hasan R."/>
            <person name="Bhutta Z.A."/>
            <person name="Quail M.A."/>
            <person name="Norbertczak H."/>
            <person name="Walker D."/>
            <person name="Simmonds M."/>
            <person name="White B."/>
            <person name="Bason N."/>
            <person name="Mungall K."/>
            <person name="Dougan G."/>
            <person name="Parkhill J."/>
        </authorList>
    </citation>
    <scope>NUCLEOTIDE SEQUENCE [LARGE SCALE GENOMIC DNA]</scope>
    <source>
        <strain>AKU_12601</strain>
    </source>
</reference>
<keyword id="KW-0067">ATP-binding</keyword>
<keyword id="KW-0342">GTP-binding</keyword>
<keyword id="KW-0547">Nucleotide-binding</keyword>
<keyword id="KW-0694">RNA-binding</keyword>
<proteinExistence type="inferred from homology"/>
<organism>
    <name type="scientific">Salmonella paratyphi A (strain AKU_12601)</name>
    <dbReference type="NCBI Taxonomy" id="554290"/>
    <lineage>
        <taxon>Bacteria</taxon>
        <taxon>Pseudomonadati</taxon>
        <taxon>Pseudomonadota</taxon>
        <taxon>Gammaproteobacteria</taxon>
        <taxon>Enterobacterales</taxon>
        <taxon>Enterobacteriaceae</taxon>
        <taxon>Salmonella</taxon>
    </lineage>
</organism>